<evidence type="ECO:0000250" key="1"/>
<evidence type="ECO:0000255" key="2">
    <source>
        <dbReference type="PROSITE-ProRule" id="PRU10088"/>
    </source>
</evidence>
<evidence type="ECO:0000255" key="3">
    <source>
        <dbReference type="PROSITE-ProRule" id="PRU10089"/>
    </source>
</evidence>
<evidence type="ECO:0000269" key="4">
    <source>
    </source>
</evidence>
<name>PEPC_LACLC</name>
<comment type="function">
    <text>Hydrolyzes naphthylamide-substituted amino acids as well as di- and tripeptides in which the half-cystine residue is involved in a disulfide loop, notably in oxytocin and vasopressin. Also has a bleomycin hydrolase activity.</text>
</comment>
<comment type="catalytic activity">
    <reaction>
        <text>Inactivates bleomycin B2 (a cytotoxic glycometallopeptide) by hydrolysis of a carboxyamide bond of beta-aminoalanine, but also shows general aminopeptidase activity. The specificity varies somewhat with source, but amino acid arylamides of Met, Leu and Ala are preferred.</text>
        <dbReference type="EC" id="3.4.22.40"/>
    </reaction>
</comment>
<comment type="subunit">
    <text>Homohexamer.</text>
</comment>
<comment type="similarity">
    <text evidence="2 3">Belongs to the peptidase C1 family.</text>
</comment>
<feature type="initiator methionine" description="Removed" evidence="4">
    <location>
        <position position="1"/>
    </location>
</feature>
<feature type="chain" id="PRO_0000050593" description="Aminopeptidase C">
    <location>
        <begin position="2"/>
        <end position="436"/>
    </location>
</feature>
<feature type="active site" evidence="1">
    <location>
        <position position="68"/>
    </location>
</feature>
<feature type="active site" evidence="1">
    <location>
        <position position="356"/>
    </location>
</feature>
<feature type="active site" evidence="1">
    <location>
        <position position="378"/>
    </location>
</feature>
<gene>
    <name type="primary">pepC</name>
</gene>
<organism>
    <name type="scientific">Lactococcus lactis subsp. cremoris</name>
    <name type="common">Streptococcus cremoris</name>
    <dbReference type="NCBI Taxonomy" id="1359"/>
    <lineage>
        <taxon>Bacteria</taxon>
        <taxon>Bacillati</taxon>
        <taxon>Bacillota</taxon>
        <taxon>Bacilli</taxon>
        <taxon>Lactobacillales</taxon>
        <taxon>Streptococcaceae</taxon>
        <taxon>Lactococcus</taxon>
    </lineage>
</organism>
<accession>Q04723</accession>
<reference key="1">
    <citation type="journal article" date="1993" name="Appl. Environ. Microbiol.">
        <title>Cloning and sequencing of pepC, a cysteine aminopeptidase gene from Lactococcus lactis subsp. cremoris AM2.</title>
        <authorList>
            <person name="Chapot-Chartier M.P."/>
            <person name="Nardi M."/>
            <person name="Chopin M.-C."/>
            <person name="Chopin A."/>
            <person name="Gripon J.-C."/>
        </authorList>
    </citation>
    <scope>NUCLEOTIDE SEQUENCE [GENOMIC DNA]</scope>
    <scope>PROTEIN SEQUENCE OF 2-16</scope>
    <source>
        <strain>AM2</strain>
    </source>
</reference>
<reference key="2">
    <citation type="journal article" date="1998" name="Biochim. Biophys. Acta">
        <title>Catalytic properties of the cysteine aminopeptidase PepC, a bacterial bleomycin hydrolase.</title>
        <authorList>
            <person name="Mistou M.Y."/>
            <person name="Gripon J.-C."/>
        </authorList>
    </citation>
    <scope>CHARACTERIZATION</scope>
</reference>
<proteinExistence type="evidence at protein level"/>
<protein>
    <recommendedName>
        <fullName>Aminopeptidase C</fullName>
        <ecNumber>3.4.22.40</ecNumber>
    </recommendedName>
    <alternativeName>
        <fullName>Bleomycin hydrolase</fullName>
    </alternativeName>
</protein>
<sequence>MTVTSDFTQKLYENFAENTKLRAVENAVTKNGLLSSLEVRGSHAANLPEFSLDLTKDPVTNQKQSGRCWMFAALNTFRHKFINEFKTEDFEFSQAYTFFWDKYEKSNWFMEQIIGDVAMDDRRLKFLLQTPQQDGGQWDMMVAIFDKYGIVPKAVYPESQASSSSRELNQYLNKLLRQDAEILRYTIEQDGDVQAVKEELLQEVFNFLAVTLGLPPQNFEFAFRNKDNEYKKFVGTPKEFYNEYVGIDLNNYVSVINAPTADKPYNKSYTVEFLGNVVGGKEVKHLNVEMDRFKKLAIAQMQAGETVWFGCDVGQESNRSAGLLTMDSYDFKSSLDIEFTQSKAGRLDYGESLMTHAMVLAGVDLDADGNSTKWKVENSWGKDAGQKGYFVASDEWMDEYTYQIVVRKDLLSEEELAAYEAKPQVLLPWDPMGALA</sequence>
<keyword id="KW-0031">Aminopeptidase</keyword>
<keyword id="KW-0903">Direct protein sequencing</keyword>
<keyword id="KW-0378">Hydrolase</keyword>
<keyword id="KW-0645">Protease</keyword>
<keyword id="KW-0788">Thiol protease</keyword>
<dbReference type="EC" id="3.4.22.40"/>
<dbReference type="EMBL" id="M86245">
    <property type="protein sequence ID" value="AAA74514.1"/>
    <property type="molecule type" value="Genomic_DNA"/>
</dbReference>
<dbReference type="PIR" id="B48957">
    <property type="entry name" value="B48957"/>
</dbReference>
<dbReference type="RefSeq" id="WP_011676889.1">
    <property type="nucleotide sequence ID" value="NZ_WJUW01000029.1"/>
</dbReference>
<dbReference type="SMR" id="Q04723"/>
<dbReference type="MEROPS" id="C01.086"/>
<dbReference type="GeneID" id="61110208"/>
<dbReference type="OMA" id="QSYTFFW"/>
<dbReference type="SABIO-RK" id="Q04723"/>
<dbReference type="GO" id="GO:0005737">
    <property type="term" value="C:cytoplasm"/>
    <property type="evidence" value="ECO:0007669"/>
    <property type="project" value="TreeGrafter"/>
</dbReference>
<dbReference type="GO" id="GO:0070005">
    <property type="term" value="F:cysteine-type aminopeptidase activity"/>
    <property type="evidence" value="ECO:0007669"/>
    <property type="project" value="InterPro"/>
</dbReference>
<dbReference type="GO" id="GO:0004197">
    <property type="term" value="F:cysteine-type endopeptidase activity"/>
    <property type="evidence" value="ECO:0007669"/>
    <property type="project" value="UniProtKB-EC"/>
</dbReference>
<dbReference type="GO" id="GO:0043418">
    <property type="term" value="P:homocysteine catabolic process"/>
    <property type="evidence" value="ECO:0007669"/>
    <property type="project" value="TreeGrafter"/>
</dbReference>
<dbReference type="GO" id="GO:0006508">
    <property type="term" value="P:proteolysis"/>
    <property type="evidence" value="ECO:0007669"/>
    <property type="project" value="UniProtKB-KW"/>
</dbReference>
<dbReference type="GO" id="GO:0009636">
    <property type="term" value="P:response to toxic substance"/>
    <property type="evidence" value="ECO:0007669"/>
    <property type="project" value="TreeGrafter"/>
</dbReference>
<dbReference type="CDD" id="cd00585">
    <property type="entry name" value="Peptidase_C1B"/>
    <property type="match status" value="1"/>
</dbReference>
<dbReference type="Gene3D" id="3.90.70.10">
    <property type="entry name" value="Cysteine proteinases"/>
    <property type="match status" value="1"/>
</dbReference>
<dbReference type="InterPro" id="IPR038765">
    <property type="entry name" value="Papain-like_cys_pep_sf"/>
</dbReference>
<dbReference type="InterPro" id="IPR000169">
    <property type="entry name" value="Pept_cys_AS"/>
</dbReference>
<dbReference type="InterPro" id="IPR025660">
    <property type="entry name" value="Pept_his_AS"/>
</dbReference>
<dbReference type="InterPro" id="IPR004134">
    <property type="entry name" value="Peptidase_C1B"/>
</dbReference>
<dbReference type="PANTHER" id="PTHR10363">
    <property type="entry name" value="BLEOMYCIN HYDROLASE"/>
    <property type="match status" value="1"/>
</dbReference>
<dbReference type="PANTHER" id="PTHR10363:SF2">
    <property type="entry name" value="BLEOMYCIN HYDROLASE"/>
    <property type="match status" value="1"/>
</dbReference>
<dbReference type="Pfam" id="PF03051">
    <property type="entry name" value="Peptidase_C1_2"/>
    <property type="match status" value="1"/>
</dbReference>
<dbReference type="PIRSF" id="PIRSF005700">
    <property type="entry name" value="PepC"/>
    <property type="match status" value="1"/>
</dbReference>
<dbReference type="SUPFAM" id="SSF54001">
    <property type="entry name" value="Cysteine proteinases"/>
    <property type="match status" value="1"/>
</dbReference>
<dbReference type="PROSITE" id="PS00139">
    <property type="entry name" value="THIOL_PROTEASE_CYS"/>
    <property type="match status" value="1"/>
</dbReference>
<dbReference type="PROSITE" id="PS00639">
    <property type="entry name" value="THIOL_PROTEASE_HIS"/>
    <property type="match status" value="1"/>
</dbReference>